<organism>
    <name type="scientific">Leptospira interrogans serogroup Icterohaemorrhagiae serovar Lai (strain 56601)</name>
    <dbReference type="NCBI Taxonomy" id="189518"/>
    <lineage>
        <taxon>Bacteria</taxon>
        <taxon>Pseudomonadati</taxon>
        <taxon>Spirochaetota</taxon>
        <taxon>Spirochaetia</taxon>
        <taxon>Leptospirales</taxon>
        <taxon>Leptospiraceae</taxon>
        <taxon>Leptospira</taxon>
    </lineage>
</organism>
<dbReference type="EC" id="3.5.4.30" evidence="1"/>
<dbReference type="EMBL" id="AE010300">
    <property type="protein sequence ID" value="AAN47271.1"/>
    <property type="molecule type" value="Genomic_DNA"/>
</dbReference>
<dbReference type="RefSeq" id="NP_710253.1">
    <property type="nucleotide sequence ID" value="NC_004342.2"/>
</dbReference>
<dbReference type="RefSeq" id="WP_000604072.1">
    <property type="nucleotide sequence ID" value="NC_004342.2"/>
</dbReference>
<dbReference type="SMR" id="Q8F9W5"/>
<dbReference type="FunCoup" id="Q8F9W5">
    <property type="interactions" value="199"/>
</dbReference>
<dbReference type="STRING" id="189518.LA_0072"/>
<dbReference type="PaxDb" id="189518-LA_0072"/>
<dbReference type="EnsemblBacteria" id="AAN47271">
    <property type="protein sequence ID" value="AAN47271"/>
    <property type="gene ID" value="LA_0072"/>
</dbReference>
<dbReference type="GeneID" id="61143420"/>
<dbReference type="KEGG" id="lil:LA_0072"/>
<dbReference type="PATRIC" id="fig|189518.3.peg.78"/>
<dbReference type="HOGENOM" id="CLU_087476_0_1_12"/>
<dbReference type="InParanoid" id="Q8F9W5"/>
<dbReference type="OrthoDB" id="9780202at2"/>
<dbReference type="UniPathway" id="UPA00610">
    <property type="reaction ID" value="UER00667"/>
</dbReference>
<dbReference type="Proteomes" id="UP000001408">
    <property type="component" value="Chromosome I"/>
</dbReference>
<dbReference type="GO" id="GO:0033973">
    <property type="term" value="F:dCTP deaminase (dUMP-forming) activity"/>
    <property type="evidence" value="ECO:0007669"/>
    <property type="project" value="UniProtKB-UniRule"/>
</dbReference>
<dbReference type="GO" id="GO:0008829">
    <property type="term" value="F:dCTP deaminase activity"/>
    <property type="evidence" value="ECO:0000318"/>
    <property type="project" value="GO_Central"/>
</dbReference>
<dbReference type="GO" id="GO:0000166">
    <property type="term" value="F:nucleotide binding"/>
    <property type="evidence" value="ECO:0007669"/>
    <property type="project" value="UniProtKB-KW"/>
</dbReference>
<dbReference type="GO" id="GO:0006226">
    <property type="term" value="P:dUMP biosynthetic process"/>
    <property type="evidence" value="ECO:0007669"/>
    <property type="project" value="UniProtKB-UniRule"/>
</dbReference>
<dbReference type="GO" id="GO:0006229">
    <property type="term" value="P:dUTP biosynthetic process"/>
    <property type="evidence" value="ECO:0007669"/>
    <property type="project" value="InterPro"/>
</dbReference>
<dbReference type="GO" id="GO:0015949">
    <property type="term" value="P:nucleobase-containing small molecule interconversion"/>
    <property type="evidence" value="ECO:0000318"/>
    <property type="project" value="GO_Central"/>
</dbReference>
<dbReference type="CDD" id="cd07557">
    <property type="entry name" value="trimeric_dUTPase"/>
    <property type="match status" value="1"/>
</dbReference>
<dbReference type="FunFam" id="2.70.40.10:FF:000009">
    <property type="entry name" value="dCTP deaminase, dUMP-forming"/>
    <property type="match status" value="1"/>
</dbReference>
<dbReference type="Gene3D" id="2.70.40.10">
    <property type="match status" value="1"/>
</dbReference>
<dbReference type="HAMAP" id="MF_00146">
    <property type="entry name" value="dCTP_deaminase"/>
    <property type="match status" value="1"/>
</dbReference>
<dbReference type="InterPro" id="IPR011962">
    <property type="entry name" value="dCTP_deaminase"/>
</dbReference>
<dbReference type="InterPro" id="IPR036157">
    <property type="entry name" value="dUTPase-like_sf"/>
</dbReference>
<dbReference type="InterPro" id="IPR033704">
    <property type="entry name" value="dUTPase_trimeric"/>
</dbReference>
<dbReference type="NCBIfam" id="TIGR02274">
    <property type="entry name" value="dCTP_deam"/>
    <property type="match status" value="1"/>
</dbReference>
<dbReference type="PANTHER" id="PTHR42680">
    <property type="entry name" value="DCTP DEAMINASE"/>
    <property type="match status" value="1"/>
</dbReference>
<dbReference type="PANTHER" id="PTHR42680:SF3">
    <property type="entry name" value="DCTP DEAMINASE"/>
    <property type="match status" value="1"/>
</dbReference>
<dbReference type="Pfam" id="PF22769">
    <property type="entry name" value="DCD"/>
    <property type="match status" value="1"/>
</dbReference>
<dbReference type="SUPFAM" id="SSF51283">
    <property type="entry name" value="dUTPase-like"/>
    <property type="match status" value="1"/>
</dbReference>
<evidence type="ECO:0000255" key="1">
    <source>
        <dbReference type="HAMAP-Rule" id="MF_00146"/>
    </source>
</evidence>
<accession>Q8F9W5</accession>
<feature type="chain" id="PRO_0000155994" description="dCTP deaminase, dUMP-forming">
    <location>
        <begin position="1"/>
        <end position="173"/>
    </location>
</feature>
<feature type="active site" description="Proton donor/acceptor" evidence="1">
    <location>
        <position position="121"/>
    </location>
</feature>
<feature type="binding site" evidence="1">
    <location>
        <begin position="93"/>
        <end position="98"/>
    </location>
    <ligand>
        <name>dCTP</name>
        <dbReference type="ChEBI" id="CHEBI:61481"/>
    </ligand>
</feature>
<feature type="binding site" evidence="1">
    <location>
        <position position="111"/>
    </location>
    <ligand>
        <name>dCTP</name>
        <dbReference type="ChEBI" id="CHEBI:61481"/>
    </ligand>
</feature>
<feature type="binding site" evidence="1">
    <location>
        <begin position="119"/>
        <end position="121"/>
    </location>
    <ligand>
        <name>dCTP</name>
        <dbReference type="ChEBI" id="CHEBI:61481"/>
    </ligand>
</feature>
<feature type="binding site" evidence="1">
    <location>
        <position position="138"/>
    </location>
    <ligand>
        <name>dCTP</name>
        <dbReference type="ChEBI" id="CHEBI:61481"/>
    </ligand>
</feature>
<feature type="site" description="Important for bifunctional activity" evidence="1">
    <location>
        <begin position="108"/>
        <end position="109"/>
    </location>
</feature>
<reference key="1">
    <citation type="journal article" date="2003" name="Nature">
        <title>Unique physiological and pathogenic features of Leptospira interrogans revealed by whole-genome sequencing.</title>
        <authorList>
            <person name="Ren S.-X."/>
            <person name="Fu G."/>
            <person name="Jiang X.-G."/>
            <person name="Zeng R."/>
            <person name="Miao Y.-G."/>
            <person name="Xu H."/>
            <person name="Zhang Y.-X."/>
            <person name="Xiong H."/>
            <person name="Lu G."/>
            <person name="Lu L.-F."/>
            <person name="Jiang H.-Q."/>
            <person name="Jia J."/>
            <person name="Tu Y.-F."/>
            <person name="Jiang J.-X."/>
            <person name="Gu W.-Y."/>
            <person name="Zhang Y.-Q."/>
            <person name="Cai Z."/>
            <person name="Sheng H.-H."/>
            <person name="Yin H.-F."/>
            <person name="Zhang Y."/>
            <person name="Zhu G.-F."/>
            <person name="Wan M."/>
            <person name="Huang H.-L."/>
            <person name="Qian Z."/>
            <person name="Wang S.-Y."/>
            <person name="Ma W."/>
            <person name="Yao Z.-J."/>
            <person name="Shen Y."/>
            <person name="Qiang B.-Q."/>
            <person name="Xia Q.-C."/>
            <person name="Guo X.-K."/>
            <person name="Danchin A."/>
            <person name="Saint Girons I."/>
            <person name="Somerville R.L."/>
            <person name="Wen Y.-M."/>
            <person name="Shi M.-H."/>
            <person name="Chen Z."/>
            <person name="Xu J.-G."/>
            <person name="Zhao G.-P."/>
        </authorList>
    </citation>
    <scope>NUCLEOTIDE SEQUENCE [LARGE SCALE GENOMIC DNA]</scope>
    <source>
        <strain>56601</strain>
    </source>
</reference>
<sequence>MILTGKEIQKRIGNDIVITPYSEKQLNPNSYNLRLHEELLVYTELPLDMKKPNPAEKLVIPESGLLLKPGILYLGRTLESTETHNLVPMLEGRSSIGRLGMLVHVTAGFGDVGFKGFWTLEISVIQPLIVYPGVEVCQIFYHTLEGQITEYTSGKYQANRGIQTSMLYKDFEK</sequence>
<protein>
    <recommendedName>
        <fullName evidence="1">dCTP deaminase, dUMP-forming</fullName>
        <ecNumber evidence="1">3.5.4.30</ecNumber>
    </recommendedName>
    <alternativeName>
        <fullName evidence="1">Bifunctional dCTP deaminase:dUTPase</fullName>
    </alternativeName>
    <alternativeName>
        <fullName evidence="1">DCD-DUT</fullName>
    </alternativeName>
</protein>
<keyword id="KW-0378">Hydrolase</keyword>
<keyword id="KW-0546">Nucleotide metabolism</keyword>
<keyword id="KW-0547">Nucleotide-binding</keyword>
<keyword id="KW-1185">Reference proteome</keyword>
<gene>
    <name evidence="1" type="primary">dcd</name>
    <name type="ordered locus">LA_0072</name>
</gene>
<name>DCDB_LEPIN</name>
<comment type="function">
    <text evidence="1">Bifunctional enzyme that catalyzes both the deamination of dCTP to dUTP and the hydrolysis of dUTP to dUMP without releasing the toxic dUTP intermediate.</text>
</comment>
<comment type="catalytic activity">
    <reaction evidence="1">
        <text>dCTP + 2 H2O = dUMP + NH4(+) + diphosphate</text>
        <dbReference type="Rhea" id="RHEA:19205"/>
        <dbReference type="ChEBI" id="CHEBI:15377"/>
        <dbReference type="ChEBI" id="CHEBI:28938"/>
        <dbReference type="ChEBI" id="CHEBI:33019"/>
        <dbReference type="ChEBI" id="CHEBI:61481"/>
        <dbReference type="ChEBI" id="CHEBI:246422"/>
        <dbReference type="EC" id="3.5.4.30"/>
    </reaction>
</comment>
<comment type="pathway">
    <text evidence="1">Pyrimidine metabolism; dUMP biosynthesis; dUMP from dCTP: step 1/1.</text>
</comment>
<comment type="subunit">
    <text evidence="1">Homotrimer.</text>
</comment>
<comment type="similarity">
    <text evidence="1">Belongs to the dCTP deaminase family.</text>
</comment>
<proteinExistence type="inferred from homology"/>